<evidence type="ECO:0000255" key="1">
    <source>
        <dbReference type="HAMAP-Rule" id="MF_00416"/>
    </source>
</evidence>
<protein>
    <recommendedName>
        <fullName evidence="1">Flagellar P-ring protein</fullName>
    </recommendedName>
    <alternativeName>
        <fullName evidence="1">Basal body P-ring protein</fullName>
    </alternativeName>
</protein>
<name>FLGI_ECO27</name>
<gene>
    <name evidence="1" type="primary">flgI</name>
    <name type="ordered locus">E2348C_1170</name>
</gene>
<keyword id="KW-0975">Bacterial flagellum</keyword>
<keyword id="KW-0574">Periplasm</keyword>
<keyword id="KW-1185">Reference proteome</keyword>
<keyword id="KW-0732">Signal</keyword>
<accession>B7UP94</accession>
<reference key="1">
    <citation type="journal article" date="2009" name="J. Bacteriol.">
        <title>Complete genome sequence and comparative genome analysis of enteropathogenic Escherichia coli O127:H6 strain E2348/69.</title>
        <authorList>
            <person name="Iguchi A."/>
            <person name="Thomson N.R."/>
            <person name="Ogura Y."/>
            <person name="Saunders D."/>
            <person name="Ooka T."/>
            <person name="Henderson I.R."/>
            <person name="Harris D."/>
            <person name="Asadulghani M."/>
            <person name="Kurokawa K."/>
            <person name="Dean P."/>
            <person name="Kenny B."/>
            <person name="Quail M.A."/>
            <person name="Thurston S."/>
            <person name="Dougan G."/>
            <person name="Hayashi T."/>
            <person name="Parkhill J."/>
            <person name="Frankel G."/>
        </authorList>
    </citation>
    <scope>NUCLEOTIDE SEQUENCE [LARGE SCALE GENOMIC DNA]</scope>
    <source>
        <strain>E2348/69 / EPEC</strain>
    </source>
</reference>
<dbReference type="EMBL" id="FM180568">
    <property type="protein sequence ID" value="CAS08718.1"/>
    <property type="molecule type" value="Genomic_DNA"/>
</dbReference>
<dbReference type="RefSeq" id="WP_000589300.1">
    <property type="nucleotide sequence ID" value="NC_011601.1"/>
</dbReference>
<dbReference type="SMR" id="B7UP94"/>
<dbReference type="KEGG" id="ecg:E2348C_1170"/>
<dbReference type="HOGENOM" id="CLU_045235_1_0_6"/>
<dbReference type="Proteomes" id="UP000008205">
    <property type="component" value="Chromosome"/>
</dbReference>
<dbReference type="GO" id="GO:0009428">
    <property type="term" value="C:bacterial-type flagellum basal body, distal rod, P ring"/>
    <property type="evidence" value="ECO:0007669"/>
    <property type="project" value="InterPro"/>
</dbReference>
<dbReference type="GO" id="GO:0030288">
    <property type="term" value="C:outer membrane-bounded periplasmic space"/>
    <property type="evidence" value="ECO:0007669"/>
    <property type="project" value="InterPro"/>
</dbReference>
<dbReference type="GO" id="GO:0005198">
    <property type="term" value="F:structural molecule activity"/>
    <property type="evidence" value="ECO:0007669"/>
    <property type="project" value="InterPro"/>
</dbReference>
<dbReference type="GO" id="GO:0071973">
    <property type="term" value="P:bacterial-type flagellum-dependent cell motility"/>
    <property type="evidence" value="ECO:0007669"/>
    <property type="project" value="InterPro"/>
</dbReference>
<dbReference type="HAMAP" id="MF_00416">
    <property type="entry name" value="FlgI"/>
    <property type="match status" value="1"/>
</dbReference>
<dbReference type="InterPro" id="IPR001782">
    <property type="entry name" value="Flag_FlgI"/>
</dbReference>
<dbReference type="NCBIfam" id="NF003676">
    <property type="entry name" value="PRK05303.1"/>
    <property type="match status" value="1"/>
</dbReference>
<dbReference type="PANTHER" id="PTHR30381">
    <property type="entry name" value="FLAGELLAR P-RING PERIPLASMIC PROTEIN FLGI"/>
    <property type="match status" value="1"/>
</dbReference>
<dbReference type="PANTHER" id="PTHR30381:SF0">
    <property type="entry name" value="FLAGELLAR P-RING PROTEIN"/>
    <property type="match status" value="1"/>
</dbReference>
<dbReference type="Pfam" id="PF02119">
    <property type="entry name" value="FlgI"/>
    <property type="match status" value="1"/>
</dbReference>
<dbReference type="PRINTS" id="PR01010">
    <property type="entry name" value="FLGPRINGFLGI"/>
</dbReference>
<proteinExistence type="inferred from homology"/>
<sequence>MIKFLSALILLLVITAAQAERIRDLTSVQGVRQNSLIGYGLVVGLDGTGDQTTQTPFTTQTLNNMLSQLGITVPTGTNMQLKNVAAVMVTASLPPFGRQGQTIDVVVSSMGNAKSLRGGTLLMTPLKGVDSQVYALAQGNILVGGAGASAGGSSVQVNQLNGGRITNGAVIERELPSQFGVGNTLNLQLNDEDFSMAQQIADTINRVRGYGSATALDARTIQVRVPSGNSSQVRFLADIQNMQVNVTPQDAKVVINSRTGSVVMNREVTLDSCAVAQGNLSVTVNRQANVSQPDTPFGGGQTVVTPQTQIDLRQSGGSLQSVRSSASLNNVVRALNALGATPMDLMSILQSMQSAGCLRAKLEII</sequence>
<organism>
    <name type="scientific">Escherichia coli O127:H6 (strain E2348/69 / EPEC)</name>
    <dbReference type="NCBI Taxonomy" id="574521"/>
    <lineage>
        <taxon>Bacteria</taxon>
        <taxon>Pseudomonadati</taxon>
        <taxon>Pseudomonadota</taxon>
        <taxon>Gammaproteobacteria</taxon>
        <taxon>Enterobacterales</taxon>
        <taxon>Enterobacteriaceae</taxon>
        <taxon>Escherichia</taxon>
    </lineage>
</organism>
<comment type="function">
    <text evidence="1">Assembles around the rod to form the L-ring and probably protects the motor/basal body from shearing forces during rotation.</text>
</comment>
<comment type="subunit">
    <text evidence="1">The basal body constitutes a major portion of the flagellar organelle and consists of four rings (L,P,S, and M) mounted on a central rod.</text>
</comment>
<comment type="subcellular location">
    <subcellularLocation>
        <location evidence="1">Periplasm</location>
    </subcellularLocation>
    <subcellularLocation>
        <location evidence="1">Bacterial flagellum basal body</location>
    </subcellularLocation>
</comment>
<comment type="similarity">
    <text evidence="1">Belongs to the FlgI family.</text>
</comment>
<feature type="signal peptide" evidence="1">
    <location>
        <begin position="1"/>
        <end position="19"/>
    </location>
</feature>
<feature type="chain" id="PRO_1000134838" description="Flagellar P-ring protein">
    <location>
        <begin position="20"/>
        <end position="365"/>
    </location>
</feature>